<name>CAX3_ORYSJ</name>
<organism>
    <name type="scientific">Oryza sativa subsp. japonica</name>
    <name type="common">Rice</name>
    <dbReference type="NCBI Taxonomy" id="39947"/>
    <lineage>
        <taxon>Eukaryota</taxon>
        <taxon>Viridiplantae</taxon>
        <taxon>Streptophyta</taxon>
        <taxon>Embryophyta</taxon>
        <taxon>Tracheophyta</taxon>
        <taxon>Spermatophyta</taxon>
        <taxon>Magnoliopsida</taxon>
        <taxon>Liliopsida</taxon>
        <taxon>Poales</taxon>
        <taxon>Poaceae</taxon>
        <taxon>BOP clade</taxon>
        <taxon>Oryzoideae</taxon>
        <taxon>Oryzeae</taxon>
        <taxon>Oryzinae</taxon>
        <taxon>Oryza</taxon>
        <taxon>Oryza sativa</taxon>
    </lineage>
</organism>
<evidence type="ECO:0000255" key="1"/>
<evidence type="ECO:0000269" key="2">
    <source>
    </source>
</evidence>
<evidence type="ECO:0000305" key="3"/>
<evidence type="ECO:0000312" key="4">
    <source>
        <dbReference type="EMBL" id="EAZ32238.1"/>
    </source>
</evidence>
<sequence>MENPQIEMGAFKANGPQLQNGGLRSSMVQSWNLQRFVESALRSIRIVIFTSKLNLLLPFGPASIILHYTTSRHGLVFLFSMLGITPLAERLGYATEQLAIYTGPTVGGLLNATFGNATEMIIAIYALKNGMIRVVQQSLLGSILSNMLLVMGCAFFAGGIVHRNKDQVFSKATAVVNSGLLLMAVMGLMFPAVLHFTHSEVRQGASEVSLSRFSSCIMLVAYASYLYFQLSGRNNAYSPIGSEEMPNEDAAEEDEESEIGMWESIAWLAMLTLWVSILSEYLVNAIEGASDSLNLPVAFISVILLPIVGNAAEHASAIMFAMKDKLDITLGVAIGSSTQISMFVIPFCVVIGWMMGQKMDLNFQLFETATLFITVLVVAFMLQDGVANYLKGLMLILCYLIVAASFFVHVDPQSSDD</sequence>
<comment type="function">
    <text evidence="2">Vacuolar cation/proton exchanger (CAX). Translocates Ca(2+) and other metal ions into vacuoles using the proton gradient formed by H(+)-ATPase and H(+)-pyrophosphatase.</text>
</comment>
<comment type="subcellular location">
    <subcellularLocation>
        <location evidence="3">Vacuole membrane</location>
        <topology evidence="3">Multi-pass membrane protein</topology>
    </subcellularLocation>
    <text>Tonoplast.</text>
</comment>
<comment type="tissue specificity">
    <text evidence="2">Ubiquitous.</text>
</comment>
<comment type="similarity">
    <text evidence="3">Belongs to the Ca(2+):cation antiporter (CaCA) (TC 2.A.19) family. Cation/proton exchanger (CAX) subfamily.</text>
</comment>
<comment type="sequence caution" evidence="3">
    <conflict type="erroneous initiation">
        <sequence resource="EMBL-CDS" id="AAO06901"/>
    </conflict>
    <text>Truncated N-terminus.</text>
</comment>
<protein>
    <recommendedName>
        <fullName>Vacuolar cation/proton exchanger 3</fullName>
    </recommendedName>
    <alternativeName>
        <fullName>Ca(2+)/H(+) exchanger 3</fullName>
    </alternativeName>
    <alternativeName>
        <fullName>OsCAX3</fullName>
    </alternativeName>
</protein>
<accession>Q6K1C4</accession>
<accession>Q0J9G8</accession>
<accession>Q7XPM6</accession>
<reference key="1">
    <citation type="journal article" date="2005" name="Plant Cell Physiol.">
        <title>Expression profile of the genes for rice cation/h+ exchanger family and functional analysis in yeast.</title>
        <authorList>
            <person name="Kamiya T."/>
            <person name="Akahori T."/>
            <person name="Maeshima M."/>
        </authorList>
    </citation>
    <scope>NUCLEOTIDE SEQUENCE [MRNA]</scope>
    <scope>FUNCTION</scope>
    <scope>TISSUE SPECIFICITY</scope>
</reference>
<reference key="2">
    <citation type="submission" date="2002-09" db="EMBL/GenBank/DDBJ databases">
        <title>Calcium-Proton Antiporter from Oryza sativa cv Zhongzuo-93.</title>
        <authorList>
            <person name="Shen G.M."/>
            <person name="Wang X.C."/>
        </authorList>
    </citation>
    <scope>NUCLEOTIDE SEQUENCE [MRNA]</scope>
    <source>
        <strain>cv. Zhongzuo-93</strain>
    </source>
</reference>
<reference key="3">
    <citation type="journal article" date="2002" name="Nature">
        <title>Sequence and analysis of rice chromosome 4.</title>
        <authorList>
            <person name="Feng Q."/>
            <person name="Zhang Y."/>
            <person name="Hao P."/>
            <person name="Wang S."/>
            <person name="Fu G."/>
            <person name="Huang Y."/>
            <person name="Li Y."/>
            <person name="Zhu J."/>
            <person name="Liu Y."/>
            <person name="Hu X."/>
            <person name="Jia P."/>
            <person name="Zhang Y."/>
            <person name="Zhao Q."/>
            <person name="Ying K."/>
            <person name="Yu S."/>
            <person name="Tang Y."/>
            <person name="Weng Q."/>
            <person name="Zhang L."/>
            <person name="Lu Y."/>
            <person name="Mu J."/>
            <person name="Lu Y."/>
            <person name="Zhang L.S."/>
            <person name="Yu Z."/>
            <person name="Fan D."/>
            <person name="Liu X."/>
            <person name="Lu T."/>
            <person name="Li C."/>
            <person name="Wu Y."/>
            <person name="Sun T."/>
            <person name="Lei H."/>
            <person name="Li T."/>
            <person name="Hu H."/>
            <person name="Guan J."/>
            <person name="Wu M."/>
            <person name="Zhang R."/>
            <person name="Zhou B."/>
            <person name="Chen Z."/>
            <person name="Chen L."/>
            <person name="Jin Z."/>
            <person name="Wang R."/>
            <person name="Yin H."/>
            <person name="Cai Z."/>
            <person name="Ren S."/>
            <person name="Lv G."/>
            <person name="Gu W."/>
            <person name="Zhu G."/>
            <person name="Tu Y."/>
            <person name="Jia J."/>
            <person name="Zhang Y."/>
            <person name="Chen J."/>
            <person name="Kang H."/>
            <person name="Chen X."/>
            <person name="Shao C."/>
            <person name="Sun Y."/>
            <person name="Hu Q."/>
            <person name="Zhang X."/>
            <person name="Zhang W."/>
            <person name="Wang L."/>
            <person name="Ding C."/>
            <person name="Sheng H."/>
            <person name="Gu J."/>
            <person name="Chen S."/>
            <person name="Ni L."/>
            <person name="Zhu F."/>
            <person name="Chen W."/>
            <person name="Lan L."/>
            <person name="Lai Y."/>
            <person name="Cheng Z."/>
            <person name="Gu M."/>
            <person name="Jiang J."/>
            <person name="Li J."/>
            <person name="Hong G."/>
            <person name="Xue Y."/>
            <person name="Han B."/>
        </authorList>
    </citation>
    <scope>NUCLEOTIDE SEQUENCE [LARGE SCALE GENOMIC DNA]</scope>
    <source>
        <strain>cv. Nipponbare</strain>
    </source>
</reference>
<reference key="4">
    <citation type="journal article" date="2005" name="Nature">
        <title>The map-based sequence of the rice genome.</title>
        <authorList>
            <consortium name="International rice genome sequencing project (IRGSP)"/>
        </authorList>
    </citation>
    <scope>NUCLEOTIDE SEQUENCE [LARGE SCALE GENOMIC DNA]</scope>
    <source>
        <strain>cv. Nipponbare</strain>
    </source>
</reference>
<reference key="5">
    <citation type="journal article" date="2008" name="Nucleic Acids Res.">
        <title>The rice annotation project database (RAP-DB): 2008 update.</title>
        <authorList>
            <consortium name="The rice annotation project (RAP)"/>
        </authorList>
    </citation>
    <scope>GENOME REANNOTATION</scope>
    <source>
        <strain>cv. Nipponbare</strain>
    </source>
</reference>
<reference key="6">
    <citation type="journal article" date="2013" name="Rice">
        <title>Improvement of the Oryza sativa Nipponbare reference genome using next generation sequence and optical map data.</title>
        <authorList>
            <person name="Kawahara Y."/>
            <person name="de la Bastide M."/>
            <person name="Hamilton J.P."/>
            <person name="Kanamori H."/>
            <person name="McCombie W.R."/>
            <person name="Ouyang S."/>
            <person name="Schwartz D.C."/>
            <person name="Tanaka T."/>
            <person name="Wu J."/>
            <person name="Zhou S."/>
            <person name="Childs K.L."/>
            <person name="Davidson R.M."/>
            <person name="Lin H."/>
            <person name="Quesada-Ocampo L."/>
            <person name="Vaillancourt B."/>
            <person name="Sakai H."/>
            <person name="Lee S.S."/>
            <person name="Kim J."/>
            <person name="Numa H."/>
            <person name="Itoh T."/>
            <person name="Buell C.R."/>
            <person name="Matsumoto T."/>
        </authorList>
    </citation>
    <scope>GENOME REANNOTATION</scope>
    <source>
        <strain>cv. Nipponbare</strain>
    </source>
</reference>
<reference key="7">
    <citation type="journal article" date="2005" name="PLoS Biol.">
        <title>The genomes of Oryza sativa: a history of duplications.</title>
        <authorList>
            <person name="Yu J."/>
            <person name="Wang J."/>
            <person name="Lin W."/>
            <person name="Li S."/>
            <person name="Li H."/>
            <person name="Zhou J."/>
            <person name="Ni P."/>
            <person name="Dong W."/>
            <person name="Hu S."/>
            <person name="Zeng C."/>
            <person name="Zhang J."/>
            <person name="Zhang Y."/>
            <person name="Li R."/>
            <person name="Xu Z."/>
            <person name="Li S."/>
            <person name="Li X."/>
            <person name="Zheng H."/>
            <person name="Cong L."/>
            <person name="Lin L."/>
            <person name="Yin J."/>
            <person name="Geng J."/>
            <person name="Li G."/>
            <person name="Shi J."/>
            <person name="Liu J."/>
            <person name="Lv H."/>
            <person name="Li J."/>
            <person name="Wang J."/>
            <person name="Deng Y."/>
            <person name="Ran L."/>
            <person name="Shi X."/>
            <person name="Wang X."/>
            <person name="Wu Q."/>
            <person name="Li C."/>
            <person name="Ren X."/>
            <person name="Wang J."/>
            <person name="Wang X."/>
            <person name="Li D."/>
            <person name="Liu D."/>
            <person name="Zhang X."/>
            <person name="Ji Z."/>
            <person name="Zhao W."/>
            <person name="Sun Y."/>
            <person name="Zhang Z."/>
            <person name="Bao J."/>
            <person name="Han Y."/>
            <person name="Dong L."/>
            <person name="Ji J."/>
            <person name="Chen P."/>
            <person name="Wu S."/>
            <person name="Liu J."/>
            <person name="Xiao Y."/>
            <person name="Bu D."/>
            <person name="Tan J."/>
            <person name="Yang L."/>
            <person name="Ye C."/>
            <person name="Zhang J."/>
            <person name="Xu J."/>
            <person name="Zhou Y."/>
            <person name="Yu Y."/>
            <person name="Zhang B."/>
            <person name="Zhuang S."/>
            <person name="Wei H."/>
            <person name="Liu B."/>
            <person name="Lei M."/>
            <person name="Yu H."/>
            <person name="Li Y."/>
            <person name="Xu H."/>
            <person name="Wei S."/>
            <person name="He X."/>
            <person name="Fang L."/>
            <person name="Zhang Z."/>
            <person name="Zhang Y."/>
            <person name="Huang X."/>
            <person name="Su Z."/>
            <person name="Tong W."/>
            <person name="Li J."/>
            <person name="Tong Z."/>
            <person name="Li S."/>
            <person name="Ye J."/>
            <person name="Wang L."/>
            <person name="Fang L."/>
            <person name="Lei T."/>
            <person name="Chen C.-S."/>
            <person name="Chen H.-C."/>
            <person name="Xu Z."/>
            <person name="Li H."/>
            <person name="Huang H."/>
            <person name="Zhang F."/>
            <person name="Xu H."/>
            <person name="Li N."/>
            <person name="Zhao C."/>
            <person name="Li S."/>
            <person name="Dong L."/>
            <person name="Huang Y."/>
            <person name="Li L."/>
            <person name="Xi Y."/>
            <person name="Qi Q."/>
            <person name="Li W."/>
            <person name="Zhang B."/>
            <person name="Hu W."/>
            <person name="Zhang Y."/>
            <person name="Tian X."/>
            <person name="Jiao Y."/>
            <person name="Liang X."/>
            <person name="Jin J."/>
            <person name="Gao L."/>
            <person name="Zheng W."/>
            <person name="Hao B."/>
            <person name="Liu S.-M."/>
            <person name="Wang W."/>
            <person name="Yuan L."/>
            <person name="Cao M."/>
            <person name="McDermott J."/>
            <person name="Samudrala R."/>
            <person name="Wang J."/>
            <person name="Wong G.K.-S."/>
            <person name="Yang H."/>
        </authorList>
    </citation>
    <scope>NUCLEOTIDE SEQUENCE [LARGE SCALE GENOMIC DNA]</scope>
    <source>
        <strain>cv. Nipponbare</strain>
    </source>
</reference>
<reference key="8">
    <citation type="journal article" date="2003" name="Science">
        <title>Collection, mapping, and annotation of over 28,000 cDNA clones from japonica rice.</title>
        <authorList>
            <consortium name="The rice full-length cDNA consortium"/>
        </authorList>
    </citation>
    <scope>NUCLEOTIDE SEQUENCE [LARGE SCALE MRNA]</scope>
    <source>
        <strain>cv. Nipponbare</strain>
    </source>
</reference>
<proteinExistence type="evidence at transcript level"/>
<feature type="chain" id="PRO_0000209501" description="Vacuolar cation/proton exchanger 3">
    <location>
        <begin position="1"/>
        <end position="417"/>
    </location>
</feature>
<feature type="topological domain" description="Cytoplasmic" evidence="1">
    <location>
        <begin position="1"/>
        <end position="45"/>
    </location>
</feature>
<feature type="transmembrane region" description="Helical" evidence="1">
    <location>
        <begin position="46"/>
        <end position="66"/>
    </location>
</feature>
<feature type="topological domain" description="Extracellular" evidence="1">
    <location>
        <begin position="67"/>
        <end position="73"/>
    </location>
</feature>
<feature type="transmembrane region" description="Helical" evidence="1">
    <location>
        <begin position="74"/>
        <end position="94"/>
    </location>
</feature>
<feature type="topological domain" description="Cytoplasmic" evidence="1">
    <location>
        <begin position="95"/>
        <end position="105"/>
    </location>
</feature>
<feature type="transmembrane region" description="Helical" evidence="1">
    <location>
        <begin position="106"/>
        <end position="126"/>
    </location>
</feature>
<feature type="topological domain" description="Extracellular" evidence="1">
    <location>
        <begin position="127"/>
        <end position="140"/>
    </location>
</feature>
<feature type="transmembrane region" description="Helical" evidence="1">
    <location>
        <begin position="141"/>
        <end position="161"/>
    </location>
</feature>
<feature type="topological domain" description="Cytoplasmic" evidence="1">
    <location>
        <begin position="162"/>
        <end position="173"/>
    </location>
</feature>
<feature type="transmembrane region" description="Helical" evidence="1">
    <location>
        <begin position="174"/>
        <end position="194"/>
    </location>
</feature>
<feature type="topological domain" description="Extracellular" evidence="1">
    <location>
        <begin position="195"/>
        <end position="207"/>
    </location>
</feature>
<feature type="transmembrane region" description="Helical" evidence="1">
    <location>
        <begin position="208"/>
        <end position="230"/>
    </location>
</feature>
<feature type="topological domain" description="Cytoplasmic" evidence="1">
    <location>
        <begin position="231"/>
        <end position="258"/>
    </location>
</feature>
<feature type="transmembrane region" description="Helical" evidence="1">
    <location>
        <begin position="259"/>
        <end position="279"/>
    </location>
</feature>
<feature type="topological domain" description="Extracellular" evidence="1">
    <location>
        <begin position="280"/>
        <end position="291"/>
    </location>
</feature>
<feature type="transmembrane region" description="Helical" evidence="1">
    <location>
        <begin position="292"/>
        <end position="312"/>
    </location>
</feature>
<feature type="topological domain" description="Cytoplasmic" evidence="1">
    <location>
        <begin position="313"/>
        <end position="330"/>
    </location>
</feature>
<feature type="transmembrane region" description="Helical" evidence="1">
    <location>
        <begin position="331"/>
        <end position="351"/>
    </location>
</feature>
<feature type="topological domain" description="Extracellular" evidence="1">
    <location>
        <begin position="352"/>
        <end position="360"/>
    </location>
</feature>
<feature type="transmembrane region" description="Helical" evidence="1">
    <location>
        <begin position="361"/>
        <end position="381"/>
    </location>
</feature>
<feature type="topological domain" description="Cytoplasmic" evidence="1">
    <location>
        <begin position="382"/>
        <end position="389"/>
    </location>
</feature>
<feature type="transmembrane region" description="Helical" evidence="1">
    <location>
        <begin position="390"/>
        <end position="410"/>
    </location>
</feature>
<feature type="topological domain" description="Extracellular" evidence="1">
    <location>
        <begin position="411"/>
        <end position="417"/>
    </location>
</feature>
<feature type="region of interest" description="Cation selection" evidence="1">
    <location>
        <begin position="115"/>
        <end position="150"/>
    </location>
</feature>
<feature type="region of interest" description="Cation selection" evidence="1">
    <location>
        <begin position="309"/>
        <end position="344"/>
    </location>
</feature>
<feature type="sequence conflict" description="In Ref. 1; AAO06901." evidence="3" ref="1">
    <original>L</original>
    <variation>S</variation>
    <location>
        <position position="149"/>
    </location>
</feature>
<feature type="sequence conflict" description="In Ref. 1; AAO06901." evidence="3" ref="1">
    <original>Q</original>
    <variation>R</variation>
    <location>
        <position position="203"/>
    </location>
</feature>
<feature type="sequence conflict" description="In Ref. 1; AAO06901." evidence="3" ref="1">
    <original>V</original>
    <variation>G</variation>
    <location>
        <position position="275"/>
    </location>
</feature>
<feature type="sequence conflict" description="In Ref. 1; AAO06901." evidence="3" ref="1">
    <original>N</original>
    <variation>H</variation>
    <location>
        <position position="310"/>
    </location>
</feature>
<feature type="sequence conflict" description="In Ref. 1; AAO06901." evidence="3" ref="1">
    <original>F</original>
    <variation>L</variation>
    <location>
        <position position="363"/>
    </location>
</feature>
<gene>
    <name type="primary">CAX3</name>
    <name type="ordered locus">Os04g0653200</name>
    <name type="ordered locus">LOC_Os04g55940</name>
    <name evidence="4" type="ORF">OsJ_16442</name>
    <name type="ORF">OSJNBa0060D06.18</name>
</gene>
<dbReference type="EMBL" id="AB112773">
    <property type="protein sequence ID" value="BAD83663.1"/>
    <property type="molecule type" value="mRNA"/>
</dbReference>
<dbReference type="EMBL" id="AY156513">
    <property type="protein sequence ID" value="AAO06901.1"/>
    <property type="status" value="ALT_INIT"/>
    <property type="molecule type" value="mRNA"/>
</dbReference>
<dbReference type="EMBL" id="AL606690">
    <property type="protein sequence ID" value="CAE03552.1"/>
    <property type="molecule type" value="Genomic_DNA"/>
</dbReference>
<dbReference type="EMBL" id="AP008210">
    <property type="protein sequence ID" value="BAF16019.1"/>
    <property type="molecule type" value="Genomic_DNA"/>
</dbReference>
<dbReference type="EMBL" id="AP014960">
    <property type="protein sequence ID" value="BAS91387.1"/>
    <property type="molecule type" value="Genomic_DNA"/>
</dbReference>
<dbReference type="EMBL" id="CM000141">
    <property type="protein sequence ID" value="EAZ32238.1"/>
    <property type="molecule type" value="Genomic_DNA"/>
</dbReference>
<dbReference type="EMBL" id="AK073795">
    <property type="protein sequence ID" value="BAG93640.1"/>
    <property type="molecule type" value="mRNA"/>
</dbReference>
<dbReference type="RefSeq" id="XP_015635688.1">
    <property type="nucleotide sequence ID" value="XM_015780202.1"/>
</dbReference>
<dbReference type="SMR" id="Q6K1C4"/>
<dbReference type="FunCoup" id="Q6K1C4">
    <property type="interactions" value="70"/>
</dbReference>
<dbReference type="STRING" id="39947.Q6K1C4"/>
<dbReference type="PaxDb" id="39947-Q6K1C4"/>
<dbReference type="EnsemblPlants" id="Os04t0653200-01">
    <property type="protein sequence ID" value="Os04t0653200-01"/>
    <property type="gene ID" value="Os04g0653200"/>
</dbReference>
<dbReference type="Gramene" id="Os04t0653200-01">
    <property type="protein sequence ID" value="Os04t0653200-01"/>
    <property type="gene ID" value="Os04g0653200"/>
</dbReference>
<dbReference type="KEGG" id="dosa:Os04g0653200"/>
<dbReference type="eggNOG" id="KOG1397">
    <property type="taxonomic scope" value="Eukaryota"/>
</dbReference>
<dbReference type="HOGENOM" id="CLU_008721_2_0_1"/>
<dbReference type="InParanoid" id="Q6K1C4"/>
<dbReference type="OMA" id="AFFYPRS"/>
<dbReference type="OrthoDB" id="1699231at2759"/>
<dbReference type="Proteomes" id="UP000000763">
    <property type="component" value="Chromosome 4"/>
</dbReference>
<dbReference type="Proteomes" id="UP000007752">
    <property type="component" value="Chromosome 4"/>
</dbReference>
<dbReference type="Proteomes" id="UP000059680">
    <property type="component" value="Chromosome 4"/>
</dbReference>
<dbReference type="GO" id="GO:0009705">
    <property type="term" value="C:plant-type vacuole membrane"/>
    <property type="evidence" value="ECO:0000318"/>
    <property type="project" value="GO_Central"/>
</dbReference>
<dbReference type="GO" id="GO:0015369">
    <property type="term" value="F:calcium:proton antiporter activity"/>
    <property type="evidence" value="ECO:0000318"/>
    <property type="project" value="GO_Central"/>
</dbReference>
<dbReference type="GO" id="GO:0070588">
    <property type="term" value="P:calcium ion transmembrane transport"/>
    <property type="evidence" value="ECO:0000318"/>
    <property type="project" value="GO_Central"/>
</dbReference>
<dbReference type="GO" id="GO:0006874">
    <property type="term" value="P:intracellular calcium ion homeostasis"/>
    <property type="evidence" value="ECO:0000318"/>
    <property type="project" value="GO_Central"/>
</dbReference>
<dbReference type="FunFam" id="1.20.1420.30:FF:000008">
    <property type="entry name" value="Vacuolar cation/proton exchanger"/>
    <property type="match status" value="1"/>
</dbReference>
<dbReference type="FunFam" id="1.20.1420.30:FF:000012">
    <property type="entry name" value="Vacuolar cation/proton exchanger"/>
    <property type="match status" value="1"/>
</dbReference>
<dbReference type="Gene3D" id="1.20.1420.30">
    <property type="entry name" value="NCX, central ion-binding region"/>
    <property type="match status" value="2"/>
</dbReference>
<dbReference type="InterPro" id="IPR004713">
    <property type="entry name" value="CaH_exchang"/>
</dbReference>
<dbReference type="InterPro" id="IPR004798">
    <property type="entry name" value="CAX-like"/>
</dbReference>
<dbReference type="InterPro" id="IPR004837">
    <property type="entry name" value="NaCa_Exmemb"/>
</dbReference>
<dbReference type="InterPro" id="IPR044880">
    <property type="entry name" value="NCX_ion-bd_dom_sf"/>
</dbReference>
<dbReference type="NCBIfam" id="TIGR00846">
    <property type="entry name" value="caca2"/>
    <property type="match status" value="1"/>
</dbReference>
<dbReference type="NCBIfam" id="TIGR00378">
    <property type="entry name" value="cax"/>
    <property type="match status" value="1"/>
</dbReference>
<dbReference type="PANTHER" id="PTHR31503">
    <property type="entry name" value="VACUOLAR CALCIUM ION TRANSPORTER"/>
    <property type="match status" value="1"/>
</dbReference>
<dbReference type="PANTHER" id="PTHR31503:SF53">
    <property type="entry name" value="VACUOLAR CATION_PROTON EXCHANGER 3"/>
    <property type="match status" value="1"/>
</dbReference>
<dbReference type="Pfam" id="PF01699">
    <property type="entry name" value="Na_Ca_ex"/>
    <property type="match status" value="2"/>
</dbReference>
<keyword id="KW-0050">Antiport</keyword>
<keyword id="KW-0106">Calcium</keyword>
<keyword id="KW-0109">Calcium transport</keyword>
<keyword id="KW-0406">Ion transport</keyword>
<keyword id="KW-0472">Membrane</keyword>
<keyword id="KW-1185">Reference proteome</keyword>
<keyword id="KW-0812">Transmembrane</keyword>
<keyword id="KW-1133">Transmembrane helix</keyword>
<keyword id="KW-0813">Transport</keyword>
<keyword id="KW-0926">Vacuole</keyword>